<name>FENR_PEDPA</name>
<comment type="catalytic activity">
    <reaction evidence="1">
        <text>2 reduced [2Fe-2S]-[ferredoxin] + NADP(+) + H(+) = 2 oxidized [2Fe-2S]-[ferredoxin] + NADPH</text>
        <dbReference type="Rhea" id="RHEA:20125"/>
        <dbReference type="Rhea" id="RHEA-COMP:10000"/>
        <dbReference type="Rhea" id="RHEA-COMP:10001"/>
        <dbReference type="ChEBI" id="CHEBI:15378"/>
        <dbReference type="ChEBI" id="CHEBI:33737"/>
        <dbReference type="ChEBI" id="CHEBI:33738"/>
        <dbReference type="ChEBI" id="CHEBI:57783"/>
        <dbReference type="ChEBI" id="CHEBI:58349"/>
        <dbReference type="EC" id="1.18.1.2"/>
    </reaction>
</comment>
<comment type="cofactor">
    <cofactor evidence="1">
        <name>FAD</name>
        <dbReference type="ChEBI" id="CHEBI:57692"/>
    </cofactor>
    <text evidence="1">Binds 1 FAD per subunit.</text>
</comment>
<comment type="subunit">
    <text evidence="1">Homodimer.</text>
</comment>
<comment type="similarity">
    <text evidence="1">Belongs to the ferredoxin--NADP reductase type 2 family.</text>
</comment>
<reference key="1">
    <citation type="journal article" date="2006" name="Proc. Natl. Acad. Sci. U.S.A.">
        <title>Comparative genomics of the lactic acid bacteria.</title>
        <authorList>
            <person name="Makarova K.S."/>
            <person name="Slesarev A."/>
            <person name="Wolf Y.I."/>
            <person name="Sorokin A."/>
            <person name="Mirkin B."/>
            <person name="Koonin E.V."/>
            <person name="Pavlov A."/>
            <person name="Pavlova N."/>
            <person name="Karamychev V."/>
            <person name="Polouchine N."/>
            <person name="Shakhova V."/>
            <person name="Grigoriev I."/>
            <person name="Lou Y."/>
            <person name="Rohksar D."/>
            <person name="Lucas S."/>
            <person name="Huang K."/>
            <person name="Goodstein D.M."/>
            <person name="Hawkins T."/>
            <person name="Plengvidhya V."/>
            <person name="Welker D."/>
            <person name="Hughes J."/>
            <person name="Goh Y."/>
            <person name="Benson A."/>
            <person name="Baldwin K."/>
            <person name="Lee J.-H."/>
            <person name="Diaz-Muniz I."/>
            <person name="Dosti B."/>
            <person name="Smeianov V."/>
            <person name="Wechter W."/>
            <person name="Barabote R."/>
            <person name="Lorca G."/>
            <person name="Altermann E."/>
            <person name="Barrangou R."/>
            <person name="Ganesan B."/>
            <person name="Xie Y."/>
            <person name="Rawsthorne H."/>
            <person name="Tamir D."/>
            <person name="Parker C."/>
            <person name="Breidt F."/>
            <person name="Broadbent J.R."/>
            <person name="Hutkins R."/>
            <person name="O'Sullivan D."/>
            <person name="Steele J."/>
            <person name="Unlu G."/>
            <person name="Saier M.H. Jr."/>
            <person name="Klaenhammer T."/>
            <person name="Richardson P."/>
            <person name="Kozyavkin S."/>
            <person name="Weimer B.C."/>
            <person name="Mills D.A."/>
        </authorList>
    </citation>
    <scope>NUCLEOTIDE SEQUENCE [LARGE SCALE GENOMIC DNA]</scope>
    <source>
        <strain>ATCC 25745 / CCUG 21536 / LMG 10740 / 183-1w</strain>
    </source>
</reference>
<accession>Q03H60</accession>
<protein>
    <recommendedName>
        <fullName evidence="1">Ferredoxin--NADP reductase</fullName>
        <shortName evidence="1">FNR</shortName>
        <shortName evidence="1">Fd-NADP(+) reductase</shortName>
        <ecNumber evidence="1">1.18.1.2</ecNumber>
    </recommendedName>
</protein>
<proteinExistence type="inferred from homology"/>
<dbReference type="EC" id="1.18.1.2" evidence="1"/>
<dbReference type="EMBL" id="CP000422">
    <property type="protein sequence ID" value="ABJ67462.1"/>
    <property type="molecule type" value="Genomic_DNA"/>
</dbReference>
<dbReference type="RefSeq" id="WP_011673037.1">
    <property type="nucleotide sequence ID" value="NC_008525.1"/>
</dbReference>
<dbReference type="SMR" id="Q03H60"/>
<dbReference type="STRING" id="278197.PEPE_0366"/>
<dbReference type="GeneID" id="33062222"/>
<dbReference type="KEGG" id="ppe:PEPE_0366"/>
<dbReference type="eggNOG" id="COG0492">
    <property type="taxonomic scope" value="Bacteria"/>
</dbReference>
<dbReference type="HOGENOM" id="CLU_031864_5_5_9"/>
<dbReference type="OrthoDB" id="9806179at2"/>
<dbReference type="Proteomes" id="UP000000773">
    <property type="component" value="Chromosome"/>
</dbReference>
<dbReference type="GO" id="GO:0004324">
    <property type="term" value="F:ferredoxin-NADP+ reductase activity"/>
    <property type="evidence" value="ECO:0007669"/>
    <property type="project" value="UniProtKB-UniRule"/>
</dbReference>
<dbReference type="GO" id="GO:0050660">
    <property type="term" value="F:flavin adenine dinucleotide binding"/>
    <property type="evidence" value="ECO:0007669"/>
    <property type="project" value="UniProtKB-UniRule"/>
</dbReference>
<dbReference type="GO" id="GO:0050661">
    <property type="term" value="F:NADP binding"/>
    <property type="evidence" value="ECO:0007669"/>
    <property type="project" value="UniProtKB-UniRule"/>
</dbReference>
<dbReference type="Gene3D" id="3.50.50.60">
    <property type="entry name" value="FAD/NAD(P)-binding domain"/>
    <property type="match status" value="2"/>
</dbReference>
<dbReference type="HAMAP" id="MF_01685">
    <property type="entry name" value="FENR2"/>
    <property type="match status" value="1"/>
</dbReference>
<dbReference type="InterPro" id="IPR036188">
    <property type="entry name" value="FAD/NAD-bd_sf"/>
</dbReference>
<dbReference type="InterPro" id="IPR023753">
    <property type="entry name" value="FAD/NAD-binding_dom"/>
</dbReference>
<dbReference type="InterPro" id="IPR022890">
    <property type="entry name" value="Fd--NADP_Rdtase_type_2"/>
</dbReference>
<dbReference type="InterPro" id="IPR050097">
    <property type="entry name" value="Ferredoxin-NADP_redctase_2"/>
</dbReference>
<dbReference type="PANTHER" id="PTHR48105">
    <property type="entry name" value="THIOREDOXIN REDUCTASE 1-RELATED-RELATED"/>
    <property type="match status" value="1"/>
</dbReference>
<dbReference type="Pfam" id="PF07992">
    <property type="entry name" value="Pyr_redox_2"/>
    <property type="match status" value="1"/>
</dbReference>
<dbReference type="PRINTS" id="PR00368">
    <property type="entry name" value="FADPNR"/>
</dbReference>
<dbReference type="PRINTS" id="PR00469">
    <property type="entry name" value="PNDRDTASEII"/>
</dbReference>
<dbReference type="SUPFAM" id="SSF51905">
    <property type="entry name" value="FAD/NAD(P)-binding domain"/>
    <property type="match status" value="1"/>
</dbReference>
<evidence type="ECO:0000255" key="1">
    <source>
        <dbReference type="HAMAP-Rule" id="MF_01685"/>
    </source>
</evidence>
<keyword id="KW-0274">FAD</keyword>
<keyword id="KW-0285">Flavoprotein</keyword>
<keyword id="KW-0521">NADP</keyword>
<keyword id="KW-0560">Oxidoreductase</keyword>
<gene>
    <name type="ordered locus">PEPE_0366</name>
</gene>
<sequence length="328" mass="36365">MTEMYDITIIGGGPAGLFAGFYAGMRTAKTQIIESLPQAGGQVAALYPEKMIYDVGGYAGIKAANLAKELEKQTRLVGTEIRLNETVVDIQAQADFYHVKTNRNEYDTRAILLATGNGAFNPRKLAVEGLDHLEDKKIYYHMPDVEHFENQDILVAGGGDSAIDIALMLEPIAKSISLVHRRQQFRGMERNVQHLQESTVKVMTPYLINGVREAVEGIDVDLKEIGTEALKATHFDKLIVNYGFTSSNKIIKGWEIDLTQEHRMFAVDSLMHTNMKNIYAIGDGVEYPGKLRLIATAFGEGPIAVNQIMNDLYPGKRGPVHSTSMFEK</sequence>
<feature type="chain" id="PRO_0000364894" description="Ferredoxin--NADP reductase">
    <location>
        <begin position="1"/>
        <end position="328"/>
    </location>
</feature>
<feature type="binding site" evidence="1">
    <location>
        <position position="34"/>
    </location>
    <ligand>
        <name>FAD</name>
        <dbReference type="ChEBI" id="CHEBI:57692"/>
    </ligand>
</feature>
<feature type="binding site" evidence="1">
    <location>
        <position position="42"/>
    </location>
    <ligand>
        <name>FAD</name>
        <dbReference type="ChEBI" id="CHEBI:57692"/>
    </ligand>
</feature>
<feature type="binding site" evidence="1">
    <location>
        <position position="47"/>
    </location>
    <ligand>
        <name>FAD</name>
        <dbReference type="ChEBI" id="CHEBI:57692"/>
    </ligand>
</feature>
<feature type="binding site" evidence="1">
    <location>
        <position position="87"/>
    </location>
    <ligand>
        <name>FAD</name>
        <dbReference type="ChEBI" id="CHEBI:57692"/>
    </ligand>
</feature>
<feature type="binding site" evidence="1">
    <location>
        <position position="120"/>
    </location>
    <ligand>
        <name>FAD</name>
        <dbReference type="ChEBI" id="CHEBI:57692"/>
    </ligand>
</feature>
<feature type="binding site" evidence="1">
    <location>
        <position position="283"/>
    </location>
    <ligand>
        <name>FAD</name>
        <dbReference type="ChEBI" id="CHEBI:57692"/>
    </ligand>
</feature>
<feature type="binding site" evidence="1">
    <location>
        <position position="323"/>
    </location>
    <ligand>
        <name>FAD</name>
        <dbReference type="ChEBI" id="CHEBI:57692"/>
    </ligand>
</feature>
<organism>
    <name type="scientific">Pediococcus pentosaceus (strain ATCC 25745 / CCUG 21536 / LMG 10740 / 183-1w)</name>
    <dbReference type="NCBI Taxonomy" id="278197"/>
    <lineage>
        <taxon>Bacteria</taxon>
        <taxon>Bacillati</taxon>
        <taxon>Bacillota</taxon>
        <taxon>Bacilli</taxon>
        <taxon>Lactobacillales</taxon>
        <taxon>Lactobacillaceae</taxon>
        <taxon>Pediococcus</taxon>
    </lineage>
</organism>